<keyword id="KW-0002">3D-structure</keyword>
<keyword id="KW-1003">Cell membrane</keyword>
<keyword id="KW-0444">Lipid biosynthesis</keyword>
<keyword id="KW-0443">Lipid metabolism</keyword>
<keyword id="KW-0472">Membrane</keyword>
<keyword id="KW-0594">Phospholipid biosynthesis</keyword>
<keyword id="KW-1208">Phospholipid metabolism</keyword>
<keyword id="KW-1185">Reference proteome</keyword>
<keyword id="KW-0808">Transferase</keyword>
<keyword id="KW-0812">Transmembrane</keyword>
<keyword id="KW-1133">Transmembrane helix</keyword>
<accession>Q58609</accession>
<name>PSS_METJA</name>
<evidence type="ECO:0000255" key="1"/>
<evidence type="ECO:0000305" key="2"/>
<evidence type="ECO:0007829" key="3">
    <source>
        <dbReference type="PDB" id="7B1L"/>
    </source>
</evidence>
<comment type="catalytic activity">
    <reaction>
        <text>a CDP-1,2-diacyl-sn-glycerol + L-serine = a 1,2-diacyl-sn-glycero-3-phospho-L-serine + CMP + H(+)</text>
        <dbReference type="Rhea" id="RHEA:16913"/>
        <dbReference type="ChEBI" id="CHEBI:15378"/>
        <dbReference type="ChEBI" id="CHEBI:33384"/>
        <dbReference type="ChEBI" id="CHEBI:57262"/>
        <dbReference type="ChEBI" id="CHEBI:58332"/>
        <dbReference type="ChEBI" id="CHEBI:60377"/>
        <dbReference type="EC" id="2.7.8.8"/>
    </reaction>
</comment>
<comment type="subcellular location">
    <subcellularLocation>
        <location>Cell membrane</location>
        <topology>Multi-pass membrane protein</topology>
    </subcellularLocation>
</comment>
<comment type="similarity">
    <text evidence="2">Belongs to the CDP-alcohol phosphatidyltransferase class-I family.</text>
</comment>
<sequence>MFSIRKIITISDYVTMLNIITGLLAILLNSFSLIYLSIIFDSLDGYVARKTGTVSDFGAELDSISDVVSFGVAPAYLLYNNFESNLALISAIIFCLCGALRLARFGILNVKGFIGLPIPAGALLLVGFCQLINSYLINSILAILIGLLMISDIKYPKYPNKIFIYIFAVSLCLAIVGIPHFALMLCLIYAIYGIIKYIRGD</sequence>
<reference key="1">
    <citation type="journal article" date="1996" name="Science">
        <title>Complete genome sequence of the methanogenic archaeon, Methanococcus jannaschii.</title>
        <authorList>
            <person name="Bult C.J."/>
            <person name="White O."/>
            <person name="Olsen G.J."/>
            <person name="Zhou L."/>
            <person name="Fleischmann R.D."/>
            <person name="Sutton G.G."/>
            <person name="Blake J.A."/>
            <person name="FitzGerald L.M."/>
            <person name="Clayton R.A."/>
            <person name="Gocayne J.D."/>
            <person name="Kerlavage A.R."/>
            <person name="Dougherty B.A."/>
            <person name="Tomb J.-F."/>
            <person name="Adams M.D."/>
            <person name="Reich C.I."/>
            <person name="Overbeek R."/>
            <person name="Kirkness E.F."/>
            <person name="Weinstock K.G."/>
            <person name="Merrick J.M."/>
            <person name="Glodek A."/>
            <person name="Scott J.L."/>
            <person name="Geoghagen N.S.M."/>
            <person name="Weidman J.F."/>
            <person name="Fuhrmann J.L."/>
            <person name="Nguyen D."/>
            <person name="Utterback T.R."/>
            <person name="Kelley J.M."/>
            <person name="Peterson J.D."/>
            <person name="Sadow P.W."/>
            <person name="Hanna M.C."/>
            <person name="Cotton M.D."/>
            <person name="Roberts K.M."/>
            <person name="Hurst M.A."/>
            <person name="Kaine B.P."/>
            <person name="Borodovsky M."/>
            <person name="Klenk H.-P."/>
            <person name="Fraser C.M."/>
            <person name="Smith H.O."/>
            <person name="Woese C.R."/>
            <person name="Venter J.C."/>
        </authorList>
    </citation>
    <scope>NUCLEOTIDE SEQUENCE [LARGE SCALE GENOMIC DNA]</scope>
    <source>
        <strain>ATCC 43067 / DSM 2661 / JAL-1 / JCM 10045 / NBRC 100440</strain>
    </source>
</reference>
<dbReference type="EC" id="2.7.8.8"/>
<dbReference type="EMBL" id="L77117">
    <property type="protein sequence ID" value="AAB99214.1"/>
    <property type="molecule type" value="Genomic_DNA"/>
</dbReference>
<dbReference type="PIR" id="C64451">
    <property type="entry name" value="C64451"/>
</dbReference>
<dbReference type="RefSeq" id="WP_010870724.1">
    <property type="nucleotide sequence ID" value="NC_000909.1"/>
</dbReference>
<dbReference type="PDB" id="7B1K">
    <property type="method" value="X-ray"/>
    <property type="resolution" value="2.20 A"/>
    <property type="chains" value="A/B=1-201"/>
</dbReference>
<dbReference type="PDB" id="7B1L">
    <property type="method" value="X-ray"/>
    <property type="resolution" value="1.85 A"/>
    <property type="chains" value="A/B=1-201"/>
</dbReference>
<dbReference type="PDB" id="7B1N">
    <property type="method" value="X-ray"/>
    <property type="resolution" value="2.80 A"/>
    <property type="chains" value="A/B=1-201"/>
</dbReference>
<dbReference type="PDB" id="7POW">
    <property type="method" value="X-ray"/>
    <property type="resolution" value="2.51 A"/>
    <property type="chains" value="A/B=1-201"/>
</dbReference>
<dbReference type="PDBsum" id="7B1K"/>
<dbReference type="PDBsum" id="7B1L"/>
<dbReference type="PDBsum" id="7B1N"/>
<dbReference type="PDBsum" id="7POW"/>
<dbReference type="SMR" id="Q58609"/>
<dbReference type="FunCoup" id="Q58609">
    <property type="interactions" value="14"/>
</dbReference>
<dbReference type="STRING" id="243232.MJ_1212"/>
<dbReference type="PaxDb" id="243232-MJ_1212"/>
<dbReference type="DNASU" id="1452108"/>
<dbReference type="EnsemblBacteria" id="AAB99214">
    <property type="protein sequence ID" value="AAB99214"/>
    <property type="gene ID" value="MJ_1212"/>
</dbReference>
<dbReference type="GeneID" id="1452108"/>
<dbReference type="KEGG" id="mja:MJ_1212"/>
<dbReference type="eggNOG" id="arCOG00671">
    <property type="taxonomic scope" value="Archaea"/>
</dbReference>
<dbReference type="HOGENOM" id="CLU_049944_3_1_2"/>
<dbReference type="InParanoid" id="Q58609"/>
<dbReference type="OrthoDB" id="221913at2157"/>
<dbReference type="PhylomeDB" id="Q58609"/>
<dbReference type="Proteomes" id="UP000000805">
    <property type="component" value="Chromosome"/>
</dbReference>
<dbReference type="GO" id="GO:0005886">
    <property type="term" value="C:plasma membrane"/>
    <property type="evidence" value="ECO:0007669"/>
    <property type="project" value="UniProtKB-SubCell"/>
</dbReference>
<dbReference type="GO" id="GO:0003882">
    <property type="term" value="F:CDP-diacylglycerol-serine O-phosphatidyltransferase activity"/>
    <property type="evidence" value="ECO:0007669"/>
    <property type="project" value="UniProtKB-EC"/>
</dbReference>
<dbReference type="GO" id="GO:0008654">
    <property type="term" value="P:phospholipid biosynthetic process"/>
    <property type="evidence" value="ECO:0007669"/>
    <property type="project" value="UniProtKB-KW"/>
</dbReference>
<dbReference type="Gene3D" id="1.20.120.1760">
    <property type="match status" value="1"/>
</dbReference>
<dbReference type="InterPro" id="IPR050324">
    <property type="entry name" value="CDP-alcohol_PTase-I"/>
</dbReference>
<dbReference type="InterPro" id="IPR004533">
    <property type="entry name" value="CDP-diaglyc--ser_O-PTrfase"/>
</dbReference>
<dbReference type="InterPro" id="IPR000462">
    <property type="entry name" value="CDP-OH_P_trans"/>
</dbReference>
<dbReference type="InterPro" id="IPR043130">
    <property type="entry name" value="CDP-OH_PTrfase_TM_dom"/>
</dbReference>
<dbReference type="InterPro" id="IPR048254">
    <property type="entry name" value="CDP_ALCOHOL_P_TRANSF_CS"/>
</dbReference>
<dbReference type="NCBIfam" id="TIGR00473">
    <property type="entry name" value="pssA"/>
    <property type="match status" value="1"/>
</dbReference>
<dbReference type="PANTHER" id="PTHR14269">
    <property type="entry name" value="CDP-DIACYLGLYCEROL--GLYCEROL-3-PHOSPHATE 3-PHOSPHATIDYLTRANSFERASE-RELATED"/>
    <property type="match status" value="1"/>
</dbReference>
<dbReference type="PANTHER" id="PTHR14269:SF61">
    <property type="entry name" value="CDP-DIACYLGLYCEROL--SERINE O-PHOSPHATIDYLTRANSFERASE"/>
    <property type="match status" value="1"/>
</dbReference>
<dbReference type="Pfam" id="PF01066">
    <property type="entry name" value="CDP-OH_P_transf"/>
    <property type="match status" value="1"/>
</dbReference>
<dbReference type="PROSITE" id="PS00379">
    <property type="entry name" value="CDP_ALCOHOL_P_TRANSF"/>
    <property type="match status" value="1"/>
</dbReference>
<organism>
    <name type="scientific">Methanocaldococcus jannaschii (strain ATCC 43067 / DSM 2661 / JAL-1 / JCM 10045 / NBRC 100440)</name>
    <name type="common">Methanococcus jannaschii</name>
    <dbReference type="NCBI Taxonomy" id="243232"/>
    <lineage>
        <taxon>Archaea</taxon>
        <taxon>Methanobacteriati</taxon>
        <taxon>Methanobacteriota</taxon>
        <taxon>Methanomada group</taxon>
        <taxon>Methanococci</taxon>
        <taxon>Methanococcales</taxon>
        <taxon>Methanocaldococcaceae</taxon>
        <taxon>Methanocaldococcus</taxon>
    </lineage>
</organism>
<protein>
    <recommendedName>
        <fullName>CDP-diacylglycerol--serine O-phosphatidyltransferase</fullName>
        <ecNumber>2.7.8.8</ecNumber>
    </recommendedName>
    <alternativeName>
        <fullName>Phosphatidylserine synthase</fullName>
    </alternativeName>
</protein>
<gene>
    <name type="primary">pssA</name>
    <name type="ordered locus">MJ1212</name>
</gene>
<proteinExistence type="evidence at protein level"/>
<feature type="chain" id="PRO_0000056799" description="CDP-diacylglycerol--serine O-phosphatidyltransferase">
    <location>
        <begin position="1"/>
        <end position="201"/>
    </location>
</feature>
<feature type="transmembrane region" description="Helical" evidence="1">
    <location>
        <begin position="19"/>
        <end position="39"/>
    </location>
</feature>
<feature type="transmembrane region" description="Helical" evidence="1">
    <location>
        <begin position="57"/>
        <end position="77"/>
    </location>
</feature>
<feature type="transmembrane region" description="Helical" evidence="1">
    <location>
        <begin position="88"/>
        <end position="108"/>
    </location>
</feature>
<feature type="transmembrane region" description="Helical" evidence="1">
    <location>
        <begin position="112"/>
        <end position="132"/>
    </location>
</feature>
<feature type="transmembrane region" description="Helical" evidence="1">
    <location>
        <begin position="133"/>
        <end position="153"/>
    </location>
</feature>
<feature type="transmembrane region" description="Helical" evidence="1">
    <location>
        <begin position="162"/>
        <end position="182"/>
    </location>
</feature>
<feature type="helix" evidence="3">
    <location>
        <begin position="3"/>
        <end position="6"/>
    </location>
</feature>
<feature type="helix" evidence="3">
    <location>
        <begin position="10"/>
        <end position="27"/>
    </location>
</feature>
<feature type="helix" evidence="3">
    <location>
        <begin position="31"/>
        <end position="51"/>
    </location>
</feature>
<feature type="helix" evidence="3">
    <location>
        <begin position="56"/>
        <end position="70"/>
    </location>
</feature>
<feature type="helix" evidence="3">
    <location>
        <begin position="72"/>
        <end position="81"/>
    </location>
</feature>
<feature type="helix" evidence="3">
    <location>
        <begin position="85"/>
        <end position="107"/>
    </location>
</feature>
<feature type="strand" evidence="3">
    <location>
        <begin position="111"/>
        <end position="116"/>
    </location>
</feature>
<feature type="helix" evidence="3">
    <location>
        <begin position="118"/>
        <end position="131"/>
    </location>
</feature>
<feature type="helix" evidence="3">
    <location>
        <begin position="135"/>
        <end position="149"/>
    </location>
</feature>
<feature type="helix" evidence="3">
    <location>
        <begin position="161"/>
        <end position="175"/>
    </location>
</feature>
<feature type="helix" evidence="3">
    <location>
        <begin position="180"/>
        <end position="199"/>
    </location>
</feature>